<sequence>MSEQERIQDCLRKEIRSLLISTKDGLTPQQLEKEYLLMVGNHLPLRILGYRSTMELVLDMPDVVSVCPCGDGTVILKAIPDESTKGIASLVAKQRRSHKVRNSMQKGRSSVCSGRVPYRGRVPPILPAVVKSELKDLLALSPVLLSDFEKAFARRFGRSFQYMQYGFLSMFEVLSAASDVICVEQTRAGSLLTLKKSASEEKQREWPAGKIFTQPFRMKQQGSYSTGFPVTKTRFSQPISNMEPPKQVLSMEKIPMFNTVEASRLSHTEKLNQLESTFKSVIAQIGPGGTVDPDLKHKIKFVVSKFPQGLFISKLLGEFELVFKEQLSPKQLGFLNVTELVGALSDILRVEFSEEKQDLLVFDADLRPLLPAGPLSSVRNSCLVQPDKRIEANAWASSPSRNSLSTVAVKKTTWDCPLKNHKEAEQKAYKKPNLVVKPLQLQVETNKSQLSLSMANHDIPPDAVRAKKLCRLPPLDTSTLVGVFVEYIISPSQFYVRIYSRDSSELLEDMMIEMRRCYSNQLVSDRYVMPEYFIQPGHLCCVRISEDKWWYRVIIHRILGKKEVEVFYPDFGNIGTVQKSSLRFLKCCYTKLPAQAIPCSLAWVRPAEEHWTSKAILHFQKLCGLKPLVGVVDEYIDGILNIFLCDTSSNEDVYFHHVLRTEGHAIVCRENAPSKGFRDFNPPALYTNSSAAPGDMVLTELGHPAQQHYLNEDGEILQQPQQDINDEKSISHLKSVSEELLKDSKLGPLKTRESCEEEPQWSILKPKDPKEENEDEVPTGMPCLESVTIGDDIWDENWLPLQAKMGKAGGPASHLFTSSLVGKKQYQTRGETTRKDWCFSTSKDIWDDSWQPLGLANDVKGRTHTPEGPIAQEKNIGTTRIRKQPDLQYPLDSSTLPKLEEFYISLIKSQQSAEGSQSEPASIQTPLKPGQASSTAPSSTPAAGDSPENHSGSAPDFSEALHSSKYSHGCLGSSCAVSHVQEPPALVPQCERREA</sequence>
<name>TDRD5_RAT</name>
<keyword id="KW-0963">Cytoplasm</keyword>
<keyword id="KW-0217">Developmental protein</keyword>
<keyword id="KW-0221">Differentiation</keyword>
<keyword id="KW-0597">Phosphoprotein</keyword>
<keyword id="KW-1185">Reference proteome</keyword>
<keyword id="KW-0677">Repeat</keyword>
<keyword id="KW-0744">Spermatogenesis</keyword>
<reference key="1">
    <citation type="journal article" date="2004" name="Genome Res.">
        <title>The status, quality, and expansion of the NIH full-length cDNA project: the Mammalian Gene Collection (MGC).</title>
        <authorList>
            <consortium name="The MGC Project Team"/>
        </authorList>
    </citation>
    <scope>NUCLEOTIDE SEQUENCE [LARGE SCALE MRNA]</scope>
    <source>
        <tissue>Brain</tissue>
    </source>
</reference>
<feature type="chain" id="PRO_0000408348" description="Tudor domain-containing protein 5">
    <location>
        <begin position="1"/>
        <end position="995"/>
    </location>
</feature>
<feature type="domain" description="HTH OST-type 1" evidence="4">
    <location>
        <begin position="7"/>
        <end position="80"/>
    </location>
</feature>
<feature type="domain" description="HTH OST-type 2" evidence="4">
    <location>
        <begin position="122"/>
        <end position="197"/>
    </location>
</feature>
<feature type="domain" description="HTH OST-type 3" evidence="4">
    <location>
        <begin position="291"/>
        <end position="365"/>
    </location>
</feature>
<feature type="domain" description="Tudor" evidence="3">
    <location>
        <begin position="533"/>
        <end position="592"/>
    </location>
</feature>
<feature type="region of interest" description="Disordered" evidence="5">
    <location>
        <begin position="747"/>
        <end position="781"/>
    </location>
</feature>
<feature type="region of interest" description="Disordered" evidence="5">
    <location>
        <begin position="857"/>
        <end position="892"/>
    </location>
</feature>
<feature type="region of interest" description="Disordered" evidence="5">
    <location>
        <begin position="911"/>
        <end position="960"/>
    </location>
</feature>
<feature type="compositionally biased region" description="Polar residues" evidence="5">
    <location>
        <begin position="911"/>
        <end position="925"/>
    </location>
</feature>
<feature type="compositionally biased region" description="Low complexity" evidence="5">
    <location>
        <begin position="932"/>
        <end position="943"/>
    </location>
</feature>
<feature type="modified residue" description="Phosphoserine" evidence="2">
    <location>
        <position position="946"/>
    </location>
</feature>
<dbReference type="EMBL" id="BC168218">
    <property type="protein sequence ID" value="AAI68218.1"/>
    <property type="molecule type" value="mRNA"/>
</dbReference>
<dbReference type="RefSeq" id="NP_001128212.1">
    <property type="nucleotide sequence ID" value="NM_001134740.1"/>
</dbReference>
<dbReference type="SMR" id="B4F7C4"/>
<dbReference type="FunCoup" id="B4F7C4">
    <property type="interactions" value="286"/>
</dbReference>
<dbReference type="STRING" id="10116.ENSRNOP00000005353"/>
<dbReference type="GlyGen" id="B4F7C4">
    <property type="glycosylation" value="1 site"/>
</dbReference>
<dbReference type="PhosphoSitePlus" id="B4F7C4"/>
<dbReference type="PaxDb" id="10116-ENSRNOP00000005353"/>
<dbReference type="PeptideAtlas" id="B4F7C4"/>
<dbReference type="GeneID" id="289129"/>
<dbReference type="KEGG" id="rno:289129"/>
<dbReference type="UCSC" id="RGD:1307078">
    <property type="organism name" value="rat"/>
</dbReference>
<dbReference type="AGR" id="RGD:1307078"/>
<dbReference type="CTD" id="163589"/>
<dbReference type="RGD" id="1307078">
    <property type="gene designation" value="Tdrd5"/>
</dbReference>
<dbReference type="eggNOG" id="KOG2039">
    <property type="taxonomic scope" value="Eukaryota"/>
</dbReference>
<dbReference type="HOGENOM" id="CLU_013593_0_0_1"/>
<dbReference type="InParanoid" id="B4F7C4"/>
<dbReference type="OrthoDB" id="10052065at2759"/>
<dbReference type="PhylomeDB" id="B4F7C4"/>
<dbReference type="TreeFam" id="TF342664"/>
<dbReference type="PRO" id="PR:B4F7C4"/>
<dbReference type="Proteomes" id="UP000002494">
    <property type="component" value="Unplaced"/>
</dbReference>
<dbReference type="GO" id="GO:0033391">
    <property type="term" value="C:chromatoid body"/>
    <property type="evidence" value="ECO:0000250"/>
    <property type="project" value="UniProtKB"/>
</dbReference>
<dbReference type="GO" id="GO:0071546">
    <property type="term" value="C:pi-body"/>
    <property type="evidence" value="ECO:0000250"/>
    <property type="project" value="UniProtKB"/>
</dbReference>
<dbReference type="GO" id="GO:0045202">
    <property type="term" value="C:synapse"/>
    <property type="evidence" value="ECO:0000266"/>
    <property type="project" value="RGD"/>
</dbReference>
<dbReference type="GO" id="GO:0030719">
    <property type="term" value="P:P granule organization"/>
    <property type="evidence" value="ECO:0000250"/>
    <property type="project" value="UniProtKB"/>
</dbReference>
<dbReference type="GO" id="GO:0007286">
    <property type="term" value="P:spermatid development"/>
    <property type="evidence" value="ECO:0000250"/>
    <property type="project" value="UniProtKB"/>
</dbReference>
<dbReference type="GO" id="GO:0141196">
    <property type="term" value="P:transposable element silencing by piRNA-mediated DNA methylation"/>
    <property type="evidence" value="ECO:0000250"/>
    <property type="project" value="UniProtKB"/>
</dbReference>
<dbReference type="CDD" id="cd09985">
    <property type="entry name" value="LOTUS_1_TDRD5"/>
    <property type="match status" value="1"/>
</dbReference>
<dbReference type="CDD" id="cd09975">
    <property type="entry name" value="LOTUS_2_TDRD5"/>
    <property type="match status" value="1"/>
</dbReference>
<dbReference type="CDD" id="cd09976">
    <property type="entry name" value="LOTUS_3_TDRD5"/>
    <property type="match status" value="1"/>
</dbReference>
<dbReference type="CDD" id="cd20419">
    <property type="entry name" value="Tudor_TDRD5"/>
    <property type="match status" value="1"/>
</dbReference>
<dbReference type="FunFam" id="2.30.30.140:FF:000051">
    <property type="entry name" value="Tudor domain-containing protein 5"/>
    <property type="match status" value="1"/>
</dbReference>
<dbReference type="FunFam" id="3.30.420.610:FF:000005">
    <property type="entry name" value="Tudor domain-containing protein 5"/>
    <property type="match status" value="1"/>
</dbReference>
<dbReference type="FunFam" id="3.30.420.610:FF:000007">
    <property type="entry name" value="Tudor domain-containing protein 5"/>
    <property type="match status" value="1"/>
</dbReference>
<dbReference type="FunFam" id="3.30.420.610:FF:000011">
    <property type="entry name" value="tudor domain-containing protein 5 isoform X3"/>
    <property type="match status" value="1"/>
</dbReference>
<dbReference type="Gene3D" id="2.30.30.140">
    <property type="match status" value="1"/>
</dbReference>
<dbReference type="Gene3D" id="2.40.50.90">
    <property type="match status" value="1"/>
</dbReference>
<dbReference type="Gene3D" id="3.30.420.610">
    <property type="entry name" value="LOTUS domain-like"/>
    <property type="match status" value="3"/>
</dbReference>
<dbReference type="InterPro" id="IPR041966">
    <property type="entry name" value="LOTUS-like"/>
</dbReference>
<dbReference type="InterPro" id="IPR025605">
    <property type="entry name" value="OST-HTH/LOTUS_dom"/>
</dbReference>
<dbReference type="InterPro" id="IPR035437">
    <property type="entry name" value="SNase_OB-fold_sf"/>
</dbReference>
<dbReference type="InterPro" id="IPR037982">
    <property type="entry name" value="TDRD5_LOTUS_2"/>
</dbReference>
<dbReference type="InterPro" id="IPR002999">
    <property type="entry name" value="Tudor"/>
</dbReference>
<dbReference type="InterPro" id="IPR050621">
    <property type="entry name" value="Tudor_domain_containing"/>
</dbReference>
<dbReference type="PANTHER" id="PTHR22948">
    <property type="entry name" value="TUDOR DOMAIN CONTAINING PROTEIN"/>
    <property type="match status" value="1"/>
</dbReference>
<dbReference type="PANTHER" id="PTHR22948:SF19">
    <property type="entry name" value="TUDOR DOMAIN-CONTAINING PROTEIN 5"/>
    <property type="match status" value="1"/>
</dbReference>
<dbReference type="Pfam" id="PF12872">
    <property type="entry name" value="OST-HTH"/>
    <property type="match status" value="3"/>
</dbReference>
<dbReference type="Pfam" id="PF00567">
    <property type="entry name" value="TUDOR"/>
    <property type="match status" value="1"/>
</dbReference>
<dbReference type="SMART" id="SM00333">
    <property type="entry name" value="TUDOR"/>
    <property type="match status" value="1"/>
</dbReference>
<dbReference type="SUPFAM" id="SSF63748">
    <property type="entry name" value="Tudor/PWWP/MBT"/>
    <property type="match status" value="1"/>
</dbReference>
<dbReference type="PROSITE" id="PS51644">
    <property type="entry name" value="HTH_OST"/>
    <property type="match status" value="3"/>
</dbReference>
<dbReference type="PROSITE" id="PS50304">
    <property type="entry name" value="TUDOR"/>
    <property type="match status" value="1"/>
</dbReference>
<organism>
    <name type="scientific">Rattus norvegicus</name>
    <name type="common">Rat</name>
    <dbReference type="NCBI Taxonomy" id="10116"/>
    <lineage>
        <taxon>Eukaryota</taxon>
        <taxon>Metazoa</taxon>
        <taxon>Chordata</taxon>
        <taxon>Craniata</taxon>
        <taxon>Vertebrata</taxon>
        <taxon>Euteleostomi</taxon>
        <taxon>Mammalia</taxon>
        <taxon>Eutheria</taxon>
        <taxon>Euarchontoglires</taxon>
        <taxon>Glires</taxon>
        <taxon>Rodentia</taxon>
        <taxon>Myomorpha</taxon>
        <taxon>Muroidea</taxon>
        <taxon>Muridae</taxon>
        <taxon>Murinae</taxon>
        <taxon>Rattus</taxon>
    </lineage>
</organism>
<protein>
    <recommendedName>
        <fullName>Tudor domain-containing protein 5</fullName>
    </recommendedName>
</protein>
<accession>B4F7C4</accession>
<proteinExistence type="evidence at transcript level"/>
<evidence type="ECO:0000250" key="1"/>
<evidence type="ECO:0000250" key="2">
    <source>
        <dbReference type="UniProtKB" id="Q5VCS6"/>
    </source>
</evidence>
<evidence type="ECO:0000255" key="3">
    <source>
        <dbReference type="PROSITE-ProRule" id="PRU00211"/>
    </source>
</evidence>
<evidence type="ECO:0000255" key="4">
    <source>
        <dbReference type="PROSITE-ProRule" id="PRU00975"/>
    </source>
</evidence>
<evidence type="ECO:0000256" key="5">
    <source>
        <dbReference type="SAM" id="MobiDB-lite"/>
    </source>
</evidence>
<evidence type="ECO:0000305" key="6"/>
<comment type="function">
    <text evidence="1">Required during spermiogenesis to participate in the repression transposable elements and prevent their mobilization, which is essential for the germline integrity. Probably acts via the piRNA metabolic process, which mediates the repression of transposable elements during meiosis by forming complexes composed of piRNAs and Piwi proteins and govern the methylation and subsequent repression of transposons. Required for chromatoid body (CB) assembly (By similarity).</text>
</comment>
<comment type="subcellular location">
    <subcellularLocation>
        <location evidence="1">Cytoplasm</location>
    </subcellularLocation>
    <text evidence="1">Localizes to chromatoid body (CB) and pi-body (also called intermitochondrial cementin), 2 cytoplasmic ribonucleoprotein granules involved in RNA processing for spermatogenesis.</text>
</comment>
<comment type="similarity">
    <text evidence="6">Belongs to the TDRD5 family.</text>
</comment>
<gene>
    <name type="primary">Tdrd5</name>
</gene>